<evidence type="ECO:0000255" key="1">
    <source>
        <dbReference type="HAMAP-Rule" id="MF_00114"/>
    </source>
</evidence>
<evidence type="ECO:0000269" key="2">
    <source ref="2"/>
</evidence>
<accession>Q5XA31</accession>
<accession>P82585</accession>
<sequence length="223" mass="24003">MEVKDILKTVDHTLLATTATWPEIQTILDDAMAYETASACIPASYVKKAAEYVSGKLAICTVIGFPNGYSTTAAKVFECQDAIQNGADEIDMVINLTDVKNGDFDTVEEEIRQIKAKCQDHILKVIVETCQLTKEELIELCGVVTRSGADFIKTSTGFSTAGATFEDVEVMAKYVGEGVKIKAAGGISSLEDAKTFIALGASRLGTSRIIKIVKNEATKPDSY</sequence>
<name>DEOC_STRP6</name>
<organism>
    <name type="scientific">Streptococcus pyogenes serotype M6 (strain ATCC BAA-946 / MGAS10394)</name>
    <dbReference type="NCBI Taxonomy" id="286636"/>
    <lineage>
        <taxon>Bacteria</taxon>
        <taxon>Bacillati</taxon>
        <taxon>Bacillota</taxon>
        <taxon>Bacilli</taxon>
        <taxon>Lactobacillales</taxon>
        <taxon>Streptococcaceae</taxon>
        <taxon>Streptococcus</taxon>
    </lineage>
</organism>
<keyword id="KW-0963">Cytoplasm</keyword>
<keyword id="KW-0903">Direct protein sequencing</keyword>
<keyword id="KW-0456">Lyase</keyword>
<keyword id="KW-0704">Schiff base</keyword>
<dbReference type="EC" id="4.1.2.4" evidence="1"/>
<dbReference type="EMBL" id="CP000003">
    <property type="protein sequence ID" value="AAT87732.1"/>
    <property type="molecule type" value="Genomic_DNA"/>
</dbReference>
<dbReference type="RefSeq" id="WP_011018205.1">
    <property type="nucleotide sequence ID" value="NC_006086.1"/>
</dbReference>
<dbReference type="SMR" id="Q5XA31"/>
<dbReference type="KEGG" id="spa:M6_Spy1597"/>
<dbReference type="HOGENOM" id="CLU_053595_0_2_9"/>
<dbReference type="UniPathway" id="UPA00002">
    <property type="reaction ID" value="UER00468"/>
</dbReference>
<dbReference type="Proteomes" id="UP000001167">
    <property type="component" value="Chromosome"/>
</dbReference>
<dbReference type="GO" id="GO:0005737">
    <property type="term" value="C:cytoplasm"/>
    <property type="evidence" value="ECO:0007669"/>
    <property type="project" value="UniProtKB-SubCell"/>
</dbReference>
<dbReference type="GO" id="GO:0004139">
    <property type="term" value="F:deoxyribose-phosphate aldolase activity"/>
    <property type="evidence" value="ECO:0007669"/>
    <property type="project" value="UniProtKB-UniRule"/>
</dbReference>
<dbReference type="GO" id="GO:0006018">
    <property type="term" value="P:2-deoxyribose 1-phosphate catabolic process"/>
    <property type="evidence" value="ECO:0007669"/>
    <property type="project" value="UniProtKB-UniRule"/>
</dbReference>
<dbReference type="GO" id="GO:0016052">
    <property type="term" value="P:carbohydrate catabolic process"/>
    <property type="evidence" value="ECO:0007669"/>
    <property type="project" value="TreeGrafter"/>
</dbReference>
<dbReference type="GO" id="GO:0009264">
    <property type="term" value="P:deoxyribonucleotide catabolic process"/>
    <property type="evidence" value="ECO:0007669"/>
    <property type="project" value="InterPro"/>
</dbReference>
<dbReference type="CDD" id="cd00959">
    <property type="entry name" value="DeoC"/>
    <property type="match status" value="1"/>
</dbReference>
<dbReference type="FunFam" id="3.20.20.70:FF:000044">
    <property type="entry name" value="Deoxyribose-phosphate aldolase"/>
    <property type="match status" value="1"/>
</dbReference>
<dbReference type="Gene3D" id="3.20.20.70">
    <property type="entry name" value="Aldolase class I"/>
    <property type="match status" value="1"/>
</dbReference>
<dbReference type="HAMAP" id="MF_00114">
    <property type="entry name" value="DeoC_type1"/>
    <property type="match status" value="1"/>
</dbReference>
<dbReference type="InterPro" id="IPR013785">
    <property type="entry name" value="Aldolase_TIM"/>
</dbReference>
<dbReference type="InterPro" id="IPR011343">
    <property type="entry name" value="DeoC"/>
</dbReference>
<dbReference type="InterPro" id="IPR002915">
    <property type="entry name" value="DeoC/FbaB/LacD_aldolase"/>
</dbReference>
<dbReference type="InterPro" id="IPR028581">
    <property type="entry name" value="DeoC_typeI"/>
</dbReference>
<dbReference type="NCBIfam" id="TIGR00126">
    <property type="entry name" value="deoC"/>
    <property type="match status" value="1"/>
</dbReference>
<dbReference type="PANTHER" id="PTHR10889">
    <property type="entry name" value="DEOXYRIBOSE-PHOSPHATE ALDOLASE"/>
    <property type="match status" value="1"/>
</dbReference>
<dbReference type="PANTHER" id="PTHR10889:SF1">
    <property type="entry name" value="DEOXYRIBOSE-PHOSPHATE ALDOLASE"/>
    <property type="match status" value="1"/>
</dbReference>
<dbReference type="Pfam" id="PF01791">
    <property type="entry name" value="DeoC"/>
    <property type="match status" value="1"/>
</dbReference>
<dbReference type="PIRSF" id="PIRSF001357">
    <property type="entry name" value="DeoC"/>
    <property type="match status" value="1"/>
</dbReference>
<dbReference type="SMART" id="SM01133">
    <property type="entry name" value="DeoC"/>
    <property type="match status" value="1"/>
</dbReference>
<dbReference type="SUPFAM" id="SSF51569">
    <property type="entry name" value="Aldolase"/>
    <property type="match status" value="1"/>
</dbReference>
<feature type="chain" id="PRO_0000057276" description="Deoxyribose-phosphate aldolase">
    <location>
        <begin position="1"/>
        <end position="223"/>
    </location>
</feature>
<feature type="active site" description="Proton donor/acceptor" evidence="1">
    <location>
        <position position="91"/>
    </location>
</feature>
<feature type="active site" description="Schiff-base intermediate with acetaldehyde" evidence="1">
    <location>
        <position position="153"/>
    </location>
</feature>
<feature type="active site" description="Proton donor/acceptor" evidence="1">
    <location>
        <position position="182"/>
    </location>
</feature>
<comment type="function">
    <text evidence="1">Catalyzes a reversible aldol reaction between acetaldehyde and D-glyceraldehyde 3-phosphate to generate 2-deoxy-D-ribose 5-phosphate.</text>
</comment>
<comment type="catalytic activity">
    <reaction evidence="1">
        <text>2-deoxy-D-ribose 5-phosphate = D-glyceraldehyde 3-phosphate + acetaldehyde</text>
        <dbReference type="Rhea" id="RHEA:12821"/>
        <dbReference type="ChEBI" id="CHEBI:15343"/>
        <dbReference type="ChEBI" id="CHEBI:59776"/>
        <dbReference type="ChEBI" id="CHEBI:62877"/>
        <dbReference type="EC" id="4.1.2.4"/>
    </reaction>
</comment>
<comment type="pathway">
    <text evidence="1">Carbohydrate degradation; 2-deoxy-D-ribose 1-phosphate degradation; D-glyceraldehyde 3-phosphate and acetaldehyde from 2-deoxy-alpha-D-ribose 1-phosphate: step 2/2.</text>
</comment>
<comment type="subcellular location">
    <subcellularLocation>
        <location evidence="1">Cytoplasm</location>
    </subcellularLocation>
</comment>
<comment type="mass spectrometry" mass="23975.38" method="Electrospray" evidence="2"/>
<comment type="similarity">
    <text evidence="1">Belongs to the DeoC/FbaB aldolase family. DeoC type 1 subfamily.</text>
</comment>
<reference key="1">
    <citation type="journal article" date="2004" name="J. Infect. Dis.">
        <title>Progress toward characterization of the group A Streptococcus metagenome: complete genome sequence of a macrolide-resistant serotype M6 strain.</title>
        <authorList>
            <person name="Banks D.J."/>
            <person name="Porcella S.F."/>
            <person name="Barbian K.D."/>
            <person name="Beres S.B."/>
            <person name="Philips L.E."/>
            <person name="Voyich J.M."/>
            <person name="DeLeo F.R."/>
            <person name="Martin J.M."/>
            <person name="Somerville G.A."/>
            <person name="Musser J.M."/>
        </authorList>
    </citation>
    <scope>NUCLEOTIDE SEQUENCE [LARGE SCALE GENOMIC DNA]</scope>
    <source>
        <strain>ATCC BAA-946 / MGAS10394</strain>
    </source>
</reference>
<reference key="2">
    <citation type="submission" date="2000-05" db="UniProtKB">
        <title>Two-dimensional gel electrophoresis map of Streptococcus pyogenes proteins.</title>
        <authorList>
            <person name="Hogan D.A."/>
            <person name="Du P."/>
            <person name="Stevenson T.I."/>
            <person name="Whitton M."/>
            <person name="Kilby G.W."/>
            <person name="Rogers J."/>
            <person name="VanBogelen R.A."/>
        </authorList>
    </citation>
    <scope>PROTEIN SEQUENCE OF 101-112 AND 183-194</scope>
    <scope>MASS SPECTROMETRY</scope>
    <source>
        <strain>JRS4 / Serotype M6</strain>
    </source>
</reference>
<gene>
    <name evidence="1" type="primary">deoC</name>
    <name type="ordered locus">M6_Spy1597</name>
</gene>
<protein>
    <recommendedName>
        <fullName evidence="1">Deoxyribose-phosphate aldolase</fullName>
        <shortName evidence="1">DERA</shortName>
        <ecNumber evidence="1">4.1.2.4</ecNumber>
    </recommendedName>
    <alternativeName>
        <fullName evidence="1">2-deoxy-D-ribose 5-phosphate aldolase</fullName>
    </alternativeName>
    <alternativeName>
        <fullName evidence="1">Phosphodeoxyriboaldolase</fullName>
        <shortName evidence="1">Deoxyriboaldolase</shortName>
    </alternativeName>
</protein>
<proteinExistence type="evidence at protein level"/>